<reference key="1">
    <citation type="journal article" date="2008" name="DNA Res.">
        <title>Complete genome sequence and comparative analysis of the wild-type commensal Escherichia coli strain SE11 isolated from a healthy adult.</title>
        <authorList>
            <person name="Oshima K."/>
            <person name="Toh H."/>
            <person name="Ogura Y."/>
            <person name="Sasamoto H."/>
            <person name="Morita H."/>
            <person name="Park S.-H."/>
            <person name="Ooka T."/>
            <person name="Iyoda S."/>
            <person name="Taylor T.D."/>
            <person name="Hayashi T."/>
            <person name="Itoh K."/>
            <person name="Hattori M."/>
        </authorList>
    </citation>
    <scope>NUCLEOTIDE SEQUENCE [LARGE SCALE GENOMIC DNA]</scope>
    <source>
        <strain>SE11</strain>
    </source>
</reference>
<feature type="chain" id="PRO_1000187018" description="2-hydroxy-6-oxononadienedioate/2-hydroxy-6-oxononatrienedioate hydrolase">
    <location>
        <begin position="1"/>
        <end position="288"/>
    </location>
</feature>
<feature type="domain" description="AB hydrolase-1" evidence="1">
    <location>
        <begin position="38"/>
        <end position="273"/>
    </location>
</feature>
<feature type="active site" description="Proton acceptor" evidence="2">
    <location>
        <position position="267"/>
    </location>
</feature>
<feature type="site" description="Transition state stabilizer" evidence="2">
    <location>
        <position position="114"/>
    </location>
</feature>
<feature type="site" description="Catalytic role in ketonization of the dienol substrate (substrate destabilization)" evidence="2">
    <location>
        <position position="192"/>
    </location>
</feature>
<protein>
    <recommendedName>
        <fullName evidence="2">2-hydroxy-6-oxononadienedioate/2-hydroxy-6-oxononatrienedioate hydrolase</fullName>
        <ecNumber evidence="2">3.7.1.14</ecNumber>
    </recommendedName>
    <alternativeName>
        <fullName evidence="2">2-hydroxy-6-ketonona-2,4-diene-1,9-dioic acid 5,6-hydrolase</fullName>
    </alternativeName>
    <alternativeName>
        <fullName evidence="2">2-hydroxy-6-oxonona-2,4,7-triene-1,9-dioic acid 5,6-hydrolase</fullName>
    </alternativeName>
    <alternativeName>
        <fullName evidence="2">2-hydroxy-6-oxonona-2,4-diene-1,9-dioic acid 5,6-hydrolase</fullName>
    </alternativeName>
</protein>
<accession>B6HZX5</accession>
<evidence type="ECO:0000255" key="1"/>
<evidence type="ECO:0000255" key="2">
    <source>
        <dbReference type="HAMAP-Rule" id="MF_01654"/>
    </source>
</evidence>
<evidence type="ECO:0000305" key="3"/>
<gene>
    <name evidence="2" type="primary">mhpC</name>
    <name type="ordered locus">ECSE_0374</name>
</gene>
<organism>
    <name type="scientific">Escherichia coli (strain SE11)</name>
    <dbReference type="NCBI Taxonomy" id="409438"/>
    <lineage>
        <taxon>Bacteria</taxon>
        <taxon>Pseudomonadati</taxon>
        <taxon>Pseudomonadota</taxon>
        <taxon>Gammaproteobacteria</taxon>
        <taxon>Enterobacterales</taxon>
        <taxon>Enterobacteriaceae</taxon>
        <taxon>Escherichia</taxon>
    </lineage>
</organism>
<sequence>MSYQPQTEAATSRFLNVEEAGKTLRIHFNDCGQGDETVVLLHGSGPGATGWANFSRNIDPLVEAGYRVILLDCPGWGKSDSIVNSGSRSDLNARILKSVVDQLDIAKIHLLGNSMGGHSSVAFTLNWPERVGKLVLMGGGTGGMSLFTPMPTEGIKRLNQLYRQPTIENLKLMMDIFVFDTSDLTDALFEARLNNMLSRRDHLENFVKSLEANPKQFPDFGPRLAEIKAQTLIVWGRNDRFVPMDAGLRLLSGIAGSELHIFRDCGHWAQWEHADAFNQLVLNFLARP</sequence>
<proteinExistence type="inferred from homology"/>
<comment type="function">
    <text evidence="2">Catalyzes the cleavage of the C5-C6 bond of 2-hydroxy-6-oxononadienedioate and 2-hydroxy-6-oxononatrienedioate, a dienol ring fission product of the bacterial meta-cleavage pathway for degradation of phenylpropionic acid.</text>
</comment>
<comment type="catalytic activity">
    <reaction evidence="2">
        <text>(2Z,4E)-2-hydroxy-6-oxonona-2,4-dienedioate + H2O = (2Z)-2-hydroxypenta-2,4-dienoate + succinate + H(+)</text>
        <dbReference type="Rhea" id="RHEA:34187"/>
        <dbReference type="ChEBI" id="CHEBI:15377"/>
        <dbReference type="ChEBI" id="CHEBI:15378"/>
        <dbReference type="ChEBI" id="CHEBI:30031"/>
        <dbReference type="ChEBI" id="CHEBI:66887"/>
        <dbReference type="ChEBI" id="CHEBI:67152"/>
        <dbReference type="EC" id="3.7.1.14"/>
    </reaction>
</comment>
<comment type="catalytic activity">
    <reaction evidence="2">
        <text>(2Z,4E,7E)-2-hydroxy-6-oxonona-2,4,7-trienedioate + H2O = (2Z)-2-hydroxypenta-2,4-dienoate + fumarate + H(+)</text>
        <dbReference type="Rhea" id="RHEA:34191"/>
        <dbReference type="ChEBI" id="CHEBI:15377"/>
        <dbReference type="ChEBI" id="CHEBI:15378"/>
        <dbReference type="ChEBI" id="CHEBI:29806"/>
        <dbReference type="ChEBI" id="CHEBI:66888"/>
        <dbReference type="ChEBI" id="CHEBI:67152"/>
        <dbReference type="EC" id="3.7.1.14"/>
    </reaction>
</comment>
<comment type="pathway">
    <text evidence="2">Aromatic compound metabolism; 3-phenylpropanoate degradation.</text>
</comment>
<comment type="subunit">
    <text evidence="2">Homodimer.</text>
</comment>
<comment type="similarity">
    <text evidence="2">Belongs to the AB hydrolase superfamily. MhpC family.</text>
</comment>
<comment type="sequence caution" evidence="3">
    <conflict type="erroneous initiation">
        <sequence resource="EMBL-CDS" id="BAG75898"/>
    </conflict>
    <text>Extended N-terminus.</text>
</comment>
<name>MHPC_ECOSE</name>
<keyword id="KW-0058">Aromatic hydrocarbons catabolism</keyword>
<keyword id="KW-0378">Hydrolase</keyword>
<dbReference type="EC" id="3.7.1.14" evidence="2"/>
<dbReference type="EMBL" id="AP009240">
    <property type="protein sequence ID" value="BAG75898.1"/>
    <property type="status" value="ALT_INIT"/>
    <property type="molecule type" value="Genomic_DNA"/>
</dbReference>
<dbReference type="RefSeq" id="WP_000121898.1">
    <property type="nucleotide sequence ID" value="NC_011415.1"/>
</dbReference>
<dbReference type="SMR" id="B6HZX5"/>
<dbReference type="ESTHER" id="ecoli-mhpc">
    <property type="family name" value="Carbon-carbon_bond_hydrolase"/>
</dbReference>
<dbReference type="MEROPS" id="S33.995"/>
<dbReference type="GeneID" id="93777106"/>
<dbReference type="KEGG" id="ecy:ECSE_0374"/>
<dbReference type="HOGENOM" id="CLU_020336_13_2_6"/>
<dbReference type="UniPathway" id="UPA00714"/>
<dbReference type="Proteomes" id="UP000008199">
    <property type="component" value="Chromosome"/>
</dbReference>
<dbReference type="GO" id="GO:0005737">
    <property type="term" value="C:cytoplasm"/>
    <property type="evidence" value="ECO:0007669"/>
    <property type="project" value="InterPro"/>
</dbReference>
<dbReference type="GO" id="GO:0052823">
    <property type="term" value="F:2-hydroxy-6-oxonona-2,4,7-trienedioate hydrolase activity"/>
    <property type="evidence" value="ECO:0007669"/>
    <property type="project" value="RHEA"/>
</dbReference>
<dbReference type="GO" id="GO:0018771">
    <property type="term" value="F:2-hydroxy-6-oxonona-2,4-dienedioate hydrolase activity"/>
    <property type="evidence" value="ECO:0007669"/>
    <property type="project" value="UniProtKB-UniRule"/>
</dbReference>
<dbReference type="GO" id="GO:0042803">
    <property type="term" value="F:protein homodimerization activity"/>
    <property type="evidence" value="ECO:0007669"/>
    <property type="project" value="InterPro"/>
</dbReference>
<dbReference type="GO" id="GO:0019380">
    <property type="term" value="P:3-phenylpropionate catabolic process"/>
    <property type="evidence" value="ECO:0007669"/>
    <property type="project" value="UniProtKB-UniRule"/>
</dbReference>
<dbReference type="FunFam" id="3.40.50.1820:FF:000085">
    <property type="entry name" value="2-hydroxy-6-oxononadienedioate/2-hydroxy-6-oxononatrienedioate hydrolase"/>
    <property type="match status" value="1"/>
</dbReference>
<dbReference type="Gene3D" id="3.40.50.1820">
    <property type="entry name" value="alpha/beta hydrolase"/>
    <property type="match status" value="1"/>
</dbReference>
<dbReference type="HAMAP" id="MF_01654">
    <property type="entry name" value="MhpC"/>
    <property type="match status" value="1"/>
</dbReference>
<dbReference type="InterPro" id="IPR000073">
    <property type="entry name" value="AB_hydrolase_1"/>
</dbReference>
<dbReference type="InterPro" id="IPR029058">
    <property type="entry name" value="AB_hydrolase_fold"/>
</dbReference>
<dbReference type="InterPro" id="IPR000639">
    <property type="entry name" value="Epox_hydrolase-like"/>
</dbReference>
<dbReference type="InterPro" id="IPR023791">
    <property type="entry name" value="MhpC_alpha/beta_hydrolase"/>
</dbReference>
<dbReference type="PANTHER" id="PTHR43689:SF8">
    <property type="entry name" value="ALPHA_BETA-HYDROLASES SUPERFAMILY PROTEIN"/>
    <property type="match status" value="1"/>
</dbReference>
<dbReference type="PANTHER" id="PTHR43689">
    <property type="entry name" value="HYDROLASE"/>
    <property type="match status" value="1"/>
</dbReference>
<dbReference type="Pfam" id="PF00561">
    <property type="entry name" value="Abhydrolase_1"/>
    <property type="match status" value="1"/>
</dbReference>
<dbReference type="PRINTS" id="PR00111">
    <property type="entry name" value="ABHYDROLASE"/>
</dbReference>
<dbReference type="PRINTS" id="PR00412">
    <property type="entry name" value="EPOXHYDRLASE"/>
</dbReference>
<dbReference type="SUPFAM" id="SSF53474">
    <property type="entry name" value="alpha/beta-Hydrolases"/>
    <property type="match status" value="1"/>
</dbReference>